<reference key="1">
    <citation type="journal article" date="1993" name="Development">
        <title>Delta-crystallin enhancer binding protein delta EF1 is a zinc finger-homeodomain protein implicated in postgastrulation embryogenesis.</title>
        <authorList>
            <person name="Funahashi J."/>
            <person name="Sekido R."/>
            <person name="Murai K."/>
            <person name="Kamachi Y."/>
            <person name="Kondoh H."/>
        </authorList>
    </citation>
    <scope>NUCLEOTIDE SEQUENCE [MRNA]</scope>
    <scope>FUNCTION</scope>
    <scope>SUBCELLULAR LOCATION</scope>
    <scope>TISSUE SPECIFICITY</scope>
    <scope>DEVELOPMENTAL STAGE</scope>
    <source>
        <tissue>Lens</tissue>
    </source>
</reference>
<reference key="2">
    <citation type="journal article" date="1996" name="Gene">
        <title>Organization of the gene encoding transcriptional repressor deltaEF1 and cross-species conservation of its domains.</title>
        <authorList>
            <person name="Sekido R."/>
            <person name="Takagi T."/>
            <person name="Okanami M."/>
            <person name="Moribe H."/>
            <person name="Yamamura M."/>
            <person name="Higashi Y."/>
            <person name="Kondoh H."/>
        </authorList>
    </citation>
    <scope>NUCLEOTIDE SEQUENCE [GENOMIC DNA]</scope>
    <source>
        <tissue>Embryo</tissue>
    </source>
</reference>
<comment type="function">
    <text evidence="3">Acts as a transcriptional repressor. Positively regulates neuronal differentiation. Represses transcription by binding to the E box-containing promoter. Binds to delta 1-crystallin enhancer core and represses lens-specific transcription (PubMed:7904558). It also binds many other non-lens specific DNA sequences (PubMed:7904558).</text>
</comment>
<comment type="subcellular location">
    <subcellularLocation>
        <location evidence="3">Nucleus</location>
    </subcellularLocation>
</comment>
<comment type="tissue specificity">
    <text evidence="3">Expression is developmentally regulated with high expression in mesoderm, nervous system and lens.</text>
</comment>
<comment type="developmental stage">
    <text evidence="3">Expression starts after gastrulation, when organogenesis has just begun.</text>
</comment>
<comment type="similarity">
    <text evidence="4">Belongs to the delta-EF1/ZFH-1 C2H2-type zinc-finger family.</text>
</comment>
<accession>P36197</accession>
<accession>O42408</accession>
<proteinExistence type="evidence at transcript level"/>
<gene>
    <name type="primary">ZEB1</name>
    <name type="synonym">TCF8</name>
</gene>
<keyword id="KW-0238">DNA-binding</keyword>
<keyword id="KW-0371">Homeobox</keyword>
<keyword id="KW-0479">Metal-binding</keyword>
<keyword id="KW-0539">Nucleus</keyword>
<keyword id="KW-1185">Reference proteome</keyword>
<keyword id="KW-0677">Repeat</keyword>
<keyword id="KW-0804">Transcription</keyword>
<keyword id="KW-0805">Transcription regulation</keyword>
<keyword id="KW-0862">Zinc</keyword>
<keyword id="KW-0863">Zinc-finger</keyword>
<dbReference type="EMBL" id="D14313">
    <property type="protein sequence ID" value="BAA03259.1"/>
    <property type="molecule type" value="mRNA"/>
</dbReference>
<dbReference type="EMBL" id="D76434">
    <property type="protein sequence ID" value="BAA11178.1"/>
    <property type="molecule type" value="Genomic_DNA"/>
</dbReference>
<dbReference type="PIR" id="I50222">
    <property type="entry name" value="I50222"/>
</dbReference>
<dbReference type="RefSeq" id="NP_990462.1">
    <property type="nucleotide sequence ID" value="NM_205131.1"/>
</dbReference>
<dbReference type="BMRB" id="P36197"/>
<dbReference type="FunCoup" id="P36197">
    <property type="interactions" value="1342"/>
</dbReference>
<dbReference type="STRING" id="9031.ENSGALP00000011738"/>
<dbReference type="GlyGen" id="P36197">
    <property type="glycosylation" value="2 sites"/>
</dbReference>
<dbReference type="PaxDb" id="9031-ENSGALP00000011738"/>
<dbReference type="GeneID" id="396029"/>
<dbReference type="KEGG" id="gga:396029"/>
<dbReference type="CTD" id="6935"/>
<dbReference type="VEuPathDB" id="HostDB:geneid_396029"/>
<dbReference type="eggNOG" id="KOG3623">
    <property type="taxonomic scope" value="Eukaryota"/>
</dbReference>
<dbReference type="InParanoid" id="P36197"/>
<dbReference type="OrthoDB" id="7491548at2759"/>
<dbReference type="PhylomeDB" id="P36197"/>
<dbReference type="PRO" id="PR:P36197"/>
<dbReference type="Proteomes" id="UP000000539">
    <property type="component" value="Unassembled WGS sequence"/>
</dbReference>
<dbReference type="GO" id="GO:0005634">
    <property type="term" value="C:nucleus"/>
    <property type="evidence" value="ECO:0000250"/>
    <property type="project" value="UniProtKB"/>
</dbReference>
<dbReference type="GO" id="GO:0000981">
    <property type="term" value="F:DNA-binding transcription factor activity, RNA polymerase II-specific"/>
    <property type="evidence" value="ECO:0000318"/>
    <property type="project" value="GO_Central"/>
</dbReference>
<dbReference type="GO" id="GO:0070888">
    <property type="term" value="F:E-box binding"/>
    <property type="evidence" value="ECO:0000250"/>
    <property type="project" value="UniProtKB"/>
</dbReference>
<dbReference type="GO" id="GO:0000978">
    <property type="term" value="F:RNA polymerase II cis-regulatory region sequence-specific DNA binding"/>
    <property type="evidence" value="ECO:0000318"/>
    <property type="project" value="GO_Central"/>
</dbReference>
<dbReference type="GO" id="GO:0008270">
    <property type="term" value="F:zinc ion binding"/>
    <property type="evidence" value="ECO:0007669"/>
    <property type="project" value="UniProtKB-KW"/>
</dbReference>
<dbReference type="GO" id="GO:0007417">
    <property type="term" value="P:central nervous system development"/>
    <property type="evidence" value="ECO:0000318"/>
    <property type="project" value="GO_Central"/>
</dbReference>
<dbReference type="GO" id="GO:0045892">
    <property type="term" value="P:negative regulation of DNA-templated transcription"/>
    <property type="evidence" value="ECO:0000250"/>
    <property type="project" value="UniProtKB"/>
</dbReference>
<dbReference type="GO" id="GO:0000122">
    <property type="term" value="P:negative regulation of transcription by RNA polymerase II"/>
    <property type="evidence" value="ECO:0007669"/>
    <property type="project" value="UniProtKB-ARBA"/>
</dbReference>
<dbReference type="GO" id="GO:0045666">
    <property type="term" value="P:positive regulation of neuron differentiation"/>
    <property type="evidence" value="ECO:0000250"/>
    <property type="project" value="UniProtKB"/>
</dbReference>
<dbReference type="GO" id="GO:0006357">
    <property type="term" value="P:regulation of transcription by RNA polymerase II"/>
    <property type="evidence" value="ECO:0000318"/>
    <property type="project" value="GO_Central"/>
</dbReference>
<dbReference type="FunFam" id="3.30.160.60:FF:000013">
    <property type="entry name" value="Putative zinc finger E-box-binding homeobox 2"/>
    <property type="match status" value="2"/>
</dbReference>
<dbReference type="FunFam" id="3.30.160.60:FF:000082">
    <property type="entry name" value="Putative zinc finger E-box-binding homeobox 2"/>
    <property type="match status" value="1"/>
</dbReference>
<dbReference type="FunFam" id="1.10.10.60:FF:000122">
    <property type="entry name" value="Zinc finger E-box binding homeobox 1"/>
    <property type="match status" value="1"/>
</dbReference>
<dbReference type="FunFam" id="3.30.160.60:FF:000744">
    <property type="entry name" value="zinc finger E-box-binding homeobox 1"/>
    <property type="match status" value="1"/>
</dbReference>
<dbReference type="FunFam" id="3.30.160.60:FF:000117">
    <property type="entry name" value="Zinc finger E-box-binding homeobox 2 isoform 1"/>
    <property type="match status" value="1"/>
</dbReference>
<dbReference type="FunFam" id="3.30.160.60:FF:000145">
    <property type="entry name" value="Zinc finger protein 574"/>
    <property type="match status" value="1"/>
</dbReference>
<dbReference type="Gene3D" id="3.30.160.60">
    <property type="entry name" value="Classic Zinc Finger"/>
    <property type="match status" value="6"/>
</dbReference>
<dbReference type="Gene3D" id="1.10.10.60">
    <property type="entry name" value="Homeodomain-like"/>
    <property type="match status" value="1"/>
</dbReference>
<dbReference type="InterPro" id="IPR008598">
    <property type="entry name" value="Di19_Zn-bd"/>
</dbReference>
<dbReference type="InterPro" id="IPR001356">
    <property type="entry name" value="HD"/>
</dbReference>
<dbReference type="InterPro" id="IPR009057">
    <property type="entry name" value="Homeodomain-like_sf"/>
</dbReference>
<dbReference type="InterPro" id="IPR036236">
    <property type="entry name" value="Znf_C2H2_sf"/>
</dbReference>
<dbReference type="InterPro" id="IPR013087">
    <property type="entry name" value="Znf_C2H2_type"/>
</dbReference>
<dbReference type="InterPro" id="IPR051574">
    <property type="entry name" value="ZnF_E-box_Homeobox"/>
</dbReference>
<dbReference type="PANTHER" id="PTHR24391">
    <property type="entry name" value="HISTONE H4 TRANSCRIPTION FACTOR-RELATED"/>
    <property type="match status" value="1"/>
</dbReference>
<dbReference type="PANTHER" id="PTHR24391:SF17">
    <property type="entry name" value="ZINC FINGER E-BOX-BINDING HOMEOBOX 1"/>
    <property type="match status" value="1"/>
</dbReference>
<dbReference type="Pfam" id="PF00096">
    <property type="entry name" value="zf-C2H2"/>
    <property type="match status" value="4"/>
</dbReference>
<dbReference type="Pfam" id="PF05605">
    <property type="entry name" value="zf-Di19"/>
    <property type="match status" value="1"/>
</dbReference>
<dbReference type="SMART" id="SM00389">
    <property type="entry name" value="HOX"/>
    <property type="match status" value="1"/>
</dbReference>
<dbReference type="SMART" id="SM00355">
    <property type="entry name" value="ZnF_C2H2"/>
    <property type="match status" value="7"/>
</dbReference>
<dbReference type="SUPFAM" id="SSF57667">
    <property type="entry name" value="beta-beta-alpha zinc fingers"/>
    <property type="match status" value="4"/>
</dbReference>
<dbReference type="SUPFAM" id="SSF46689">
    <property type="entry name" value="Homeodomain-like"/>
    <property type="match status" value="1"/>
</dbReference>
<dbReference type="PROSITE" id="PS00028">
    <property type="entry name" value="ZINC_FINGER_C2H2_1"/>
    <property type="match status" value="5"/>
</dbReference>
<dbReference type="PROSITE" id="PS50157">
    <property type="entry name" value="ZINC_FINGER_C2H2_2"/>
    <property type="match status" value="7"/>
</dbReference>
<name>ZEB1_CHICK</name>
<organism>
    <name type="scientific">Gallus gallus</name>
    <name type="common">Chicken</name>
    <dbReference type="NCBI Taxonomy" id="9031"/>
    <lineage>
        <taxon>Eukaryota</taxon>
        <taxon>Metazoa</taxon>
        <taxon>Chordata</taxon>
        <taxon>Craniata</taxon>
        <taxon>Vertebrata</taxon>
        <taxon>Euteleostomi</taxon>
        <taxon>Archelosauria</taxon>
        <taxon>Archosauria</taxon>
        <taxon>Dinosauria</taxon>
        <taxon>Saurischia</taxon>
        <taxon>Theropoda</taxon>
        <taxon>Coelurosauria</taxon>
        <taxon>Aves</taxon>
        <taxon>Neognathae</taxon>
        <taxon>Galloanserae</taxon>
        <taxon>Galliformes</taxon>
        <taxon>Phasianidae</taxon>
        <taxon>Phasianinae</taxon>
        <taxon>Gallus</taxon>
    </lineage>
</organism>
<feature type="chain" id="PRO_0000047235" description="Zinc finger E-box-binding homeobox 1">
    <location>
        <begin position="1"/>
        <end position="1114"/>
    </location>
</feature>
<feature type="zinc finger region" description="C2H2-type 1" evidence="1">
    <location>
        <begin position="170"/>
        <end position="193"/>
    </location>
</feature>
<feature type="zinc finger region" description="C2H2-type 2" evidence="1">
    <location>
        <begin position="200"/>
        <end position="222"/>
    </location>
</feature>
<feature type="zinc finger region" description="C2H2-type 3" evidence="1">
    <location>
        <begin position="240"/>
        <end position="262"/>
    </location>
</feature>
<feature type="zinc finger region" description="C2H2-type 4; atypical" evidence="1">
    <location>
        <begin position="268"/>
        <end position="292"/>
    </location>
</feature>
<feature type="DNA-binding region" description="Homeobox; atypical">
    <location>
        <begin position="581"/>
        <end position="640"/>
    </location>
</feature>
<feature type="zinc finger region" description="C2H2-type 5" evidence="1">
    <location>
        <begin position="904"/>
        <end position="926"/>
    </location>
</feature>
<feature type="zinc finger region" description="C2H2-type 6" evidence="1">
    <location>
        <begin position="932"/>
        <end position="954"/>
    </location>
</feature>
<feature type="zinc finger region" description="C2H2-type 7; atypical" evidence="1">
    <location>
        <begin position="960"/>
        <end position="981"/>
    </location>
</feature>
<feature type="region of interest" description="Disordered" evidence="2">
    <location>
        <begin position="1"/>
        <end position="105"/>
    </location>
</feature>
<feature type="region of interest" description="Disordered" evidence="2">
    <location>
        <begin position="142"/>
        <end position="163"/>
    </location>
</feature>
<feature type="region of interest" description="Disordered" evidence="2">
    <location>
        <begin position="304"/>
        <end position="326"/>
    </location>
</feature>
<feature type="region of interest" description="Disordered" evidence="2">
    <location>
        <begin position="491"/>
        <end position="529"/>
    </location>
</feature>
<feature type="region of interest" description="Disordered" evidence="2">
    <location>
        <begin position="553"/>
        <end position="588"/>
    </location>
</feature>
<feature type="region of interest" description="Disordered" evidence="2">
    <location>
        <begin position="636"/>
        <end position="716"/>
    </location>
</feature>
<feature type="region of interest" description="Disordered" evidence="2">
    <location>
        <begin position="852"/>
        <end position="898"/>
    </location>
</feature>
<feature type="region of interest" description="Disordered" evidence="2">
    <location>
        <begin position="989"/>
        <end position="1114"/>
    </location>
</feature>
<feature type="short sequence motif" description="CTBP-binding motif">
    <location>
        <begin position="767"/>
        <end position="771"/>
    </location>
</feature>
<feature type="compositionally biased region" description="Low complexity" evidence="2">
    <location>
        <begin position="15"/>
        <end position="30"/>
    </location>
</feature>
<feature type="compositionally biased region" description="Polar residues" evidence="2">
    <location>
        <begin position="149"/>
        <end position="160"/>
    </location>
</feature>
<feature type="compositionally biased region" description="Low complexity" evidence="2">
    <location>
        <begin position="309"/>
        <end position="326"/>
    </location>
</feature>
<feature type="compositionally biased region" description="Basic and acidic residues" evidence="2">
    <location>
        <begin position="504"/>
        <end position="523"/>
    </location>
</feature>
<feature type="compositionally biased region" description="Polar residues" evidence="2">
    <location>
        <begin position="573"/>
        <end position="584"/>
    </location>
</feature>
<feature type="compositionally biased region" description="Polar residues" evidence="2">
    <location>
        <begin position="636"/>
        <end position="681"/>
    </location>
</feature>
<feature type="compositionally biased region" description="Low complexity" evidence="2">
    <location>
        <begin position="682"/>
        <end position="716"/>
    </location>
</feature>
<feature type="compositionally biased region" description="Polar residues" evidence="2">
    <location>
        <begin position="852"/>
        <end position="866"/>
    </location>
</feature>
<feature type="compositionally biased region" description="Polar residues" evidence="2">
    <location>
        <begin position="874"/>
        <end position="890"/>
    </location>
</feature>
<feature type="compositionally biased region" description="Acidic residues" evidence="2">
    <location>
        <begin position="1031"/>
        <end position="1047"/>
    </location>
</feature>
<feature type="compositionally biased region" description="Basic and acidic residues" evidence="2">
    <location>
        <begin position="1048"/>
        <end position="1062"/>
    </location>
</feature>
<feature type="compositionally biased region" description="Acidic residues" evidence="2">
    <location>
        <begin position="1063"/>
        <end position="1078"/>
    </location>
</feature>
<feature type="compositionally biased region" description="Basic and acidic residues" evidence="2">
    <location>
        <begin position="1079"/>
        <end position="1089"/>
    </location>
</feature>
<feature type="sequence conflict" description="In Ref. 2; BAA11178." evidence="4" ref="2">
    <original>K</original>
    <variation>N</variation>
    <location>
        <position position="299"/>
    </location>
</feature>
<sequence length="1114" mass="123151">MADGPRCKRRKQANPRRNNVTNYNNVIEANSDSDDEDKLHIVEEESITDAADCDASVPEDDLPTDHTVLPENSEREGSTNSCWEDEGKETKEILGPEAQSDEVGCTVKEDECDSDAENEQNHDPNVEEFLQQEDTAVIYPEAPEEDQRQGTPEASGQDENGTPDAFSQLLTCPYCDRGYKRFTSLKEHIKYRHEKNEDNFSCSLCSYTFAYRTQLDRHMTSHKSGRDQRHVTQSSGNRKFKCTECGKAFKYKHHLKEHLRIHSGEKPYECPNCKKRFSHSGSYSSHISSKKCIGLMPVKGRARSGLKTSQCSSPSLSASPGSPARPQIRQKIENKPLQEQLPVNQIKTEPVDYEFKPIVVASGINCSTPLQNGVFSGGSPLQATSSPQGVVQAVVLPTVGLVSPISINLSDIQNVLKVAVDGNVIRQVLENNHANLASKEQETISNASIQQAGHSLISAISLPLVDQDGTTKIIINYSLEQPSQLQVVPQNLKKEHSVPTNSCKNEKLPEDLTVKSEKDKNFEGETNDSTCLLCDDCPGDLNALQELKHYETKNPPQLPQSSGTEAEKPSSPAPSETGENNLSPGQPPLKNLLSLLKAYYALNAQPSAEELSKIADSVNLPLDVVKKWFEKMQAGQISVQSSGPSSPEQVKISSPTDNDDQAATTNESEPQNSTNNSQNPANTSKSQTSSGGSTQNGSRSSTPSPSPLNLSSSRNSQGYTYTAEGVQEEPQMEPLDLSLPKQHGELLERSTITSVYQNSVYSVQEEPLNLTCAKKEPQKDNSITDSDPIVNVIPPSANPINIAIPTVTAQLPTIVAIADQNSVPCLRALAANKQTILIPQVAYTYSTTVSPAVQETPPKQTQANGSQDERQDTSSEGVSNVEDQNDSDSTPPKKKMRKTENGMYACDLCDKIFQKSSSLLRHKYEHTGKRPHECGICKKAFKHKHHLIEHMRLHSGEKPYQCDKCGKRFSHSGSYSQHMNHRYSYCKREAEERDSTEQEEVGQEVLSSEHAGARASPSQIDSDERESLTREEEEDSEKEEEEEEEKDVEGLQEEKECRKLQDVEEEEEVEEEEEEEEGKTEGNKNDDVVNRASNAEPEVIQSNGQVSEEKTNKA</sequence>
<protein>
    <recommendedName>
        <fullName>Zinc finger E-box-binding homeobox 1</fullName>
    </recommendedName>
    <alternativeName>
        <fullName>Delta EF1</fullName>
    </alternativeName>
    <alternativeName>
        <fullName>Delta-crystallin enhancer-binding factor</fullName>
    </alternativeName>
    <alternativeName>
        <fullName>Transcription factor 8</fullName>
        <shortName>TCF-8</shortName>
    </alternativeName>
</protein>
<evidence type="ECO:0000255" key="1">
    <source>
        <dbReference type="PROSITE-ProRule" id="PRU00042"/>
    </source>
</evidence>
<evidence type="ECO:0000256" key="2">
    <source>
        <dbReference type="SAM" id="MobiDB-lite"/>
    </source>
</evidence>
<evidence type="ECO:0000269" key="3">
    <source>
    </source>
</evidence>
<evidence type="ECO:0000305" key="4"/>